<sequence>MSKEIPTPYIWSYQPQTGHAAGASQDYSTQMNWFSAGPSMISHVYGIRDLRNKVLMTQAQITKTPRTIMDPPIWPASMLVQKHATPKTIALPRNHTLEQAMVNCGAQLAGGRQPSPSHIDIKDTMLAGTGIQLGEDIPSVSWIRPDGIFQLGGGSRSSFSPTQAFLTLQQASSTPRTGGVGSYQFVREFVPEVYLNPFSGPPDTFPDQFIPNYDIVTNSVDGYD</sequence>
<organismHost>
    <name type="scientific">Canis lupus familiaris</name>
    <name type="common">Dog</name>
    <name type="synonym">Canis familiaris</name>
    <dbReference type="NCBI Taxonomy" id="9615"/>
</organismHost>
<gene>
    <name evidence="1" type="primary">L4</name>
</gene>
<reference key="1">
    <citation type="journal article" date="1997" name="J. Gen. Virol.">
        <title>Complete DNA sequence of canine adenovirus type 1.</title>
        <authorList>
            <person name="Morrison M.D."/>
            <person name="Onions D.E."/>
            <person name="Nicolson L."/>
        </authorList>
    </citation>
    <scope>NUCLEOTIDE SEQUENCE [LARGE SCALE GENOMIC DNA]</scope>
</reference>
<feature type="chain" id="PRO_0000421412" description="Pre-hexon-linking protein VIII" evidence="1">
    <location>
        <begin position="1"/>
        <end position="224"/>
    </location>
</feature>
<feature type="peptide" id="PRO_0000421413" description="Hexon-linking protein-N" evidence="1">
    <location>
        <begin position="1"/>
        <end position="111"/>
    </location>
</feature>
<feature type="propeptide" id="PRO_0000036505" evidence="1">
    <location>
        <begin position="112"/>
        <end position="154"/>
    </location>
</feature>
<feature type="peptide" id="PRO_0000036506" description="Hexon-linking protein-C" evidence="1">
    <location>
        <begin position="155"/>
        <end position="224"/>
    </location>
</feature>
<feature type="site" description="Cleavage; by viral protease" evidence="1">
    <location>
        <begin position="111"/>
        <end position="112"/>
    </location>
</feature>
<feature type="site" description="Cleavage; by viral protease" evidence="1">
    <location>
        <begin position="154"/>
        <end position="155"/>
    </location>
</feature>
<feature type="modified residue" description="Phosphothreonine; by host" evidence="1">
    <location>
        <position position="64"/>
    </location>
</feature>
<protein>
    <recommendedName>
        <fullName evidence="1">Pre-hexon-linking protein VIII</fullName>
    </recommendedName>
    <alternativeName>
        <fullName evidence="1">Pre-protein VIII</fullName>
        <shortName evidence="1">pVIII</shortName>
    </alternativeName>
    <component>
        <recommendedName>
            <fullName evidence="1">Hexon-linking protein-N</fullName>
        </recommendedName>
        <alternativeName>
            <fullName evidence="1">12.1 kDa protein VIII</fullName>
        </alternativeName>
        <alternativeName>
            <fullName evidence="1">Protein VIII-N</fullName>
        </alternativeName>
    </component>
    <component>
        <recommendedName>
            <fullName evidence="1">Hexon-linking protein-C</fullName>
        </recommendedName>
        <alternativeName>
            <fullName evidence="1">7.6 kDa protein VIII</fullName>
        </alternativeName>
        <alternativeName>
            <fullName evidence="1">Protein VIII-C</fullName>
        </alternativeName>
    </component>
</protein>
<proteinExistence type="inferred from homology"/>
<accession>P68949</accession>
<accession>Q89783</accession>
<name>CAP8_ADECR</name>
<comment type="function">
    <molecule>Hexon-linking protein-N</molecule>
    <text evidence="1">Structural component of the virion that acts as a cement protein on the capsid interior and which glue the peripentonal hexons and group-of-nine hexons together.</text>
</comment>
<comment type="function">
    <molecule>Hexon-linking protein-C</molecule>
    <text evidence="1">Structural component of the virion that acts as a cement protein on the capsid interior and which glue the peripentonal hexons and group-of-nine hexons together.</text>
</comment>
<comment type="subunit">
    <text evidence="1">Interacts with the peripentonal hexons as well as the hexons in the facets. Part of a complex composed of the core-capsid bridging protein, the endosome lysis protein VI and the hexon-linking protein VIII; these interactions bridge the virus core to the capsid.</text>
</comment>
<comment type="subcellular location">
    <molecule>Hexon-linking protein-C</molecule>
    <subcellularLocation>
        <location evidence="1">Virion</location>
    </subcellularLocation>
    <text evidence="1">Located on the inner side of the capsid shell. Present in 120 copies per virion.</text>
</comment>
<comment type="subcellular location">
    <molecule>Pre-hexon-linking protein VIII</molecule>
    <subcellularLocation>
        <location evidence="1">Host nucleus</location>
    </subcellularLocation>
</comment>
<comment type="subcellular location">
    <molecule>Hexon-linking protein-N</molecule>
    <subcellularLocation>
        <location evidence="1">Virion</location>
    </subcellularLocation>
    <text evidence="1">Located on the inner side of the capsid shell. Present in 120 copies per virion.</text>
</comment>
<comment type="induction">
    <text evidence="1">Expressed in the late phase of the viral replicative cycle.</text>
</comment>
<comment type="PTM">
    <text evidence="1">Cleaved by the viral protease during virion maturation. May cause the middle segment to be shed from the capsid.</text>
</comment>
<comment type="miscellaneous">
    <text evidence="1">All late proteins expressed from the major late promoter are produced by alternative splicing and alternative polyadenylation of the same gene giving rise to non-overlapping ORFs. A leader sequence is present in the N-terminus of all these mRNAs and is recognized by the viral shutoff protein to provide expression although conventional translation via ribosome scanning from the cap has been shut off in the host cell.</text>
</comment>
<comment type="similarity">
    <text evidence="1 2">Belongs to the adenoviridae hexon-linking protein family.</text>
</comment>
<dbReference type="EMBL" id="Y07760">
    <property type="protein sequence ID" value="CAA69041.1"/>
    <property type="molecule type" value="Genomic_DNA"/>
</dbReference>
<dbReference type="RefSeq" id="AP_000065.1">
    <property type="nucleotide sequence ID" value="AC_000003.1"/>
</dbReference>
<dbReference type="SMR" id="P68949"/>
<dbReference type="KEGG" id="vg:1488937"/>
<dbReference type="Proteomes" id="UP000126130">
    <property type="component" value="Segment"/>
</dbReference>
<dbReference type="GO" id="GO:0042025">
    <property type="term" value="C:host cell nucleus"/>
    <property type="evidence" value="ECO:0007669"/>
    <property type="project" value="UniProtKB-SubCell"/>
</dbReference>
<dbReference type="GO" id="GO:0019028">
    <property type="term" value="C:viral capsid"/>
    <property type="evidence" value="ECO:0007669"/>
    <property type="project" value="UniProtKB-UniRule"/>
</dbReference>
<dbReference type="GO" id="GO:0031423">
    <property type="term" value="F:hexon binding"/>
    <property type="evidence" value="ECO:0007669"/>
    <property type="project" value="InterPro"/>
</dbReference>
<dbReference type="Gene3D" id="6.10.250.1460">
    <property type="match status" value="1"/>
</dbReference>
<dbReference type="HAMAP" id="MF_04049">
    <property type="entry name" value="ADV_CAP8"/>
    <property type="match status" value="1"/>
</dbReference>
<dbReference type="InterPro" id="IPR000646">
    <property type="entry name" value="Adeno_PVIII"/>
</dbReference>
<dbReference type="Pfam" id="PF01310">
    <property type="entry name" value="Adeno_PVIII"/>
    <property type="match status" value="1"/>
</dbReference>
<organism>
    <name type="scientific">Canine adenovirus serotype 1 (strain RI261)</name>
    <name type="common">CAdV-1</name>
    <name type="synonym">Canine adenovirus 1 (strain RI261)</name>
    <dbReference type="NCBI Taxonomy" id="69151"/>
    <lineage>
        <taxon>Viruses</taxon>
        <taxon>Varidnaviria</taxon>
        <taxon>Bamfordvirae</taxon>
        <taxon>Preplasmiviricota</taxon>
        <taxon>Tectiliviricetes</taxon>
        <taxon>Rowavirales</taxon>
        <taxon>Adenoviridae</taxon>
        <taxon>Mastadenovirus</taxon>
        <taxon>Canine mastadenovirus A</taxon>
    </lineage>
</organism>
<evidence type="ECO:0000255" key="1">
    <source>
        <dbReference type="HAMAP-Rule" id="MF_04049"/>
    </source>
</evidence>
<evidence type="ECO:0000305" key="2"/>
<keyword id="KW-0167">Capsid protein</keyword>
<keyword id="KW-1048">Host nucleus</keyword>
<keyword id="KW-0426">Late protein</keyword>
<keyword id="KW-0597">Phosphoprotein</keyword>
<keyword id="KW-0946">Virion</keyword>